<name>Y1020_PYRFU</name>
<protein>
    <recommendedName>
        <fullName>Putative phosphate permease PF1020</fullName>
    </recommendedName>
</protein>
<keyword id="KW-1003">Cell membrane</keyword>
<keyword id="KW-0472">Membrane</keyword>
<keyword id="KW-0592">Phosphate transport</keyword>
<keyword id="KW-1185">Reference proteome</keyword>
<keyword id="KW-0812">Transmembrane</keyword>
<keyword id="KW-1133">Transmembrane helix</keyword>
<keyword id="KW-0813">Transport</keyword>
<proteinExistence type="inferred from homology"/>
<dbReference type="EMBL" id="AE009950">
    <property type="protein sequence ID" value="AAL81144.1"/>
    <property type="molecule type" value="Genomic_DNA"/>
</dbReference>
<dbReference type="RefSeq" id="WP_011012158.1">
    <property type="nucleotide sequence ID" value="NZ_CP023154.1"/>
</dbReference>
<dbReference type="SMR" id="Q8U230"/>
<dbReference type="STRING" id="186497.PF1020"/>
<dbReference type="PaxDb" id="186497-PF1020"/>
<dbReference type="KEGG" id="pfu:PF1020"/>
<dbReference type="PATRIC" id="fig|186497.12.peg.1081"/>
<dbReference type="eggNOG" id="arCOG02267">
    <property type="taxonomic scope" value="Archaea"/>
</dbReference>
<dbReference type="HOGENOM" id="CLU_015355_3_3_2"/>
<dbReference type="OrthoDB" id="101311at2157"/>
<dbReference type="PhylomeDB" id="Q8U230"/>
<dbReference type="Proteomes" id="UP000001013">
    <property type="component" value="Chromosome"/>
</dbReference>
<dbReference type="GO" id="GO:0005886">
    <property type="term" value="C:plasma membrane"/>
    <property type="evidence" value="ECO:0007669"/>
    <property type="project" value="UniProtKB-SubCell"/>
</dbReference>
<dbReference type="GO" id="GO:0005315">
    <property type="term" value="F:phosphate transmembrane transporter activity"/>
    <property type="evidence" value="ECO:0007669"/>
    <property type="project" value="InterPro"/>
</dbReference>
<dbReference type="GO" id="GO:0035435">
    <property type="term" value="P:phosphate ion transmembrane transport"/>
    <property type="evidence" value="ECO:0007669"/>
    <property type="project" value="TreeGrafter"/>
</dbReference>
<dbReference type="InterPro" id="IPR001204">
    <property type="entry name" value="Phos_transporter"/>
</dbReference>
<dbReference type="PANTHER" id="PTHR11101">
    <property type="entry name" value="PHOSPHATE TRANSPORTER"/>
    <property type="match status" value="1"/>
</dbReference>
<dbReference type="PANTHER" id="PTHR11101:SF80">
    <property type="entry name" value="PHOSPHATE TRANSPORTER"/>
    <property type="match status" value="1"/>
</dbReference>
<dbReference type="Pfam" id="PF01384">
    <property type="entry name" value="PHO4"/>
    <property type="match status" value="1"/>
</dbReference>
<organism>
    <name type="scientific">Pyrococcus furiosus (strain ATCC 43587 / DSM 3638 / JCM 8422 / Vc1)</name>
    <dbReference type="NCBI Taxonomy" id="186497"/>
    <lineage>
        <taxon>Archaea</taxon>
        <taxon>Methanobacteriati</taxon>
        <taxon>Methanobacteriota</taxon>
        <taxon>Thermococci</taxon>
        <taxon>Thermococcales</taxon>
        <taxon>Thermococcaceae</taxon>
        <taxon>Pyrococcus</taxon>
    </lineage>
</organism>
<comment type="function">
    <text>Potential transporter for phosphate.</text>
</comment>
<comment type="subcellular location">
    <subcellularLocation>
        <location evidence="2">Cell membrane</location>
        <topology evidence="2">Multi-pass membrane protein</topology>
    </subcellularLocation>
</comment>
<comment type="similarity">
    <text evidence="2">Belongs to the inorganic phosphate transporter (PiT) (TC 2.A.20) family.</text>
</comment>
<gene>
    <name type="ordered locus">PF1020</name>
</gene>
<evidence type="ECO:0000255" key="1"/>
<evidence type="ECO:0000305" key="2"/>
<sequence>MQLGFAMLADPILLITILLGFAMAWAIGANDAANSMSTAVGAGAITPRQAVIIAGVLEFMGAYFFGKTVTETIRKGIIDPSKITDPNVLIFGSIAALIGATIWLVIATKYGLPVSTTHSIIGGIVGYGIVYGGMSIVNWDKMIKVVLSWILSPIVGAIFAYLVFRALSKTVLQSKDPVKSAKRWSPFWIGLAFVVIGTMFYIKVLHGNSLLEGFLKYGMPAGILTFIVVSLILEKRFPATDPYLGAERVFRRVQVITSAYVALAHGANDVANAIGPVAAVYTVAMFGLAGAKVPVPRWILALGGLGIAIGVATYGYKVMETVGKKITELTNTRGFTIDFSAATVVLIASWLGMPISTTHTVVGAVIGVGLARGIKAINKDIVKDIIISWFVTVPAAGVIAGIIFKALMMLMG</sequence>
<feature type="chain" id="PRO_0000080806" description="Putative phosphate permease PF1020">
    <location>
        <begin position="1"/>
        <end position="412"/>
    </location>
</feature>
<feature type="transmembrane region" description="Helical" evidence="1">
    <location>
        <begin position="7"/>
        <end position="27"/>
    </location>
</feature>
<feature type="transmembrane region" description="Helical" evidence="1">
    <location>
        <begin position="50"/>
        <end position="70"/>
    </location>
</feature>
<feature type="transmembrane region" description="Helical" evidence="1">
    <location>
        <begin position="88"/>
        <end position="108"/>
    </location>
</feature>
<feature type="transmembrane region" description="Helical" evidence="1">
    <location>
        <begin position="119"/>
        <end position="139"/>
    </location>
</feature>
<feature type="transmembrane region" description="Helical" evidence="1">
    <location>
        <begin position="143"/>
        <end position="163"/>
    </location>
</feature>
<feature type="transmembrane region" description="Helical" evidence="1">
    <location>
        <begin position="187"/>
        <end position="207"/>
    </location>
</feature>
<feature type="transmembrane region" description="Helical" evidence="1">
    <location>
        <begin position="213"/>
        <end position="233"/>
    </location>
</feature>
<feature type="transmembrane region" description="Helical" evidence="1">
    <location>
        <begin position="298"/>
        <end position="318"/>
    </location>
</feature>
<feature type="transmembrane region" description="Helical" evidence="1">
    <location>
        <begin position="335"/>
        <end position="355"/>
    </location>
</feature>
<feature type="transmembrane region" description="Helical" evidence="1">
    <location>
        <begin position="384"/>
        <end position="404"/>
    </location>
</feature>
<reference key="1">
    <citation type="journal article" date="1999" name="Genetics">
        <title>Divergence of the hyperthermophilic archaea Pyrococcus furiosus and P. horikoshii inferred from complete genomic sequences.</title>
        <authorList>
            <person name="Maeder D.L."/>
            <person name="Weiss R.B."/>
            <person name="Dunn D.M."/>
            <person name="Cherry J.L."/>
            <person name="Gonzalez J.M."/>
            <person name="DiRuggiero J."/>
            <person name="Robb F.T."/>
        </authorList>
    </citation>
    <scope>NUCLEOTIDE SEQUENCE [LARGE SCALE GENOMIC DNA]</scope>
    <source>
        <strain>ATCC 43587 / DSM 3638 / JCM 8422 / Vc1</strain>
    </source>
</reference>
<accession>Q8U230</accession>